<accession>Q5UPM3</accession>
<reference key="1">
    <citation type="journal article" date="2004" name="Science">
        <title>The 1.2-megabase genome sequence of Mimivirus.</title>
        <authorList>
            <person name="Raoult D."/>
            <person name="Audic S."/>
            <person name="Robert C."/>
            <person name="Abergel C."/>
            <person name="Renesto P."/>
            <person name="Ogata H."/>
            <person name="La Scola B."/>
            <person name="Susan M."/>
            <person name="Claverie J.-M."/>
        </authorList>
    </citation>
    <scope>NUCLEOTIDE SEQUENCE [LARGE SCALE GENOMIC DNA]</scope>
    <source>
        <strain>Rowbotham-Bradford</strain>
    </source>
</reference>
<name>YR159_MIMIV</name>
<sequence>MSASIGDLIGDSIGDSKKNLNASSKPFVPASLCHHNKQVKDTEAHYCDGKRFDVVISDVLIGWVERTGGKWRGYCNIPGGPAVDLIYIVRFPIGGRDSIKTFRESVISWEHKHYHTLHETIAEVWVVREHFRSKSIYQ</sequence>
<proteinExistence type="predicted"/>
<dbReference type="EMBL" id="AY653733">
    <property type="protein sequence ID" value="AAV50434.1"/>
    <property type="molecule type" value="Genomic_DNA"/>
</dbReference>
<dbReference type="KEGG" id="vg:9924759"/>
<dbReference type="Proteomes" id="UP000001134">
    <property type="component" value="Genome"/>
</dbReference>
<organism>
    <name type="scientific">Acanthamoeba polyphaga mimivirus</name>
    <name type="common">APMV</name>
    <dbReference type="NCBI Taxonomy" id="212035"/>
    <lineage>
        <taxon>Viruses</taxon>
        <taxon>Varidnaviria</taxon>
        <taxon>Bamfordvirae</taxon>
        <taxon>Nucleocytoviricota</taxon>
        <taxon>Megaviricetes</taxon>
        <taxon>Imitervirales</taxon>
        <taxon>Mimiviridae</taxon>
        <taxon>Megamimivirinae</taxon>
        <taxon>Mimivirus</taxon>
        <taxon>Mimivirus bradfordmassiliense</taxon>
    </lineage>
</organism>
<gene>
    <name type="ordered locus">MIMI_R159</name>
</gene>
<feature type="chain" id="PRO_0000247383" description="Uncharacterized protein R159">
    <location>
        <begin position="1"/>
        <end position="138"/>
    </location>
</feature>
<protein>
    <recommendedName>
        <fullName>Uncharacterized protein R159</fullName>
    </recommendedName>
</protein>
<keyword id="KW-1185">Reference proteome</keyword>
<organismHost>
    <name type="scientific">Acanthamoeba polyphaga</name>
    <name type="common">Amoeba</name>
    <dbReference type="NCBI Taxonomy" id="5757"/>
</organismHost>